<dbReference type="EC" id="3.5.1.126" evidence="1"/>
<dbReference type="EMBL" id="CP000647">
    <property type="protein sequence ID" value="ABR77199.1"/>
    <property type="molecule type" value="Genomic_DNA"/>
</dbReference>
<dbReference type="RefSeq" id="WP_015958435.1">
    <property type="nucleotide sequence ID" value="NC_009648.1"/>
</dbReference>
<dbReference type="PDB" id="5HFT">
    <property type="method" value="X-ray"/>
    <property type="resolution" value="2.65 A"/>
    <property type="chains" value="A/C=1-341, B/D=342-528"/>
</dbReference>
<dbReference type="PDBsum" id="5HFT"/>
<dbReference type="SMR" id="A6T9C8"/>
<dbReference type="STRING" id="272620.KPN_01768"/>
<dbReference type="MEROPS" id="T03.025"/>
<dbReference type="PaxDb" id="272620-KPN_01768"/>
<dbReference type="EnsemblBacteria" id="ABR77199">
    <property type="protein sequence ID" value="ABR77199"/>
    <property type="gene ID" value="KPN_01768"/>
</dbReference>
<dbReference type="KEGG" id="kpn:KPN_01768"/>
<dbReference type="HOGENOM" id="CLU_014813_3_0_6"/>
<dbReference type="BRENDA" id="3.5.1.126">
    <property type="organism ID" value="2817"/>
</dbReference>
<dbReference type="Proteomes" id="UP000000265">
    <property type="component" value="Chromosome"/>
</dbReference>
<dbReference type="GO" id="GO:0008233">
    <property type="term" value="F:peptidase activity"/>
    <property type="evidence" value="ECO:0007669"/>
    <property type="project" value="UniProtKB-KW"/>
</dbReference>
<dbReference type="GO" id="GO:0006508">
    <property type="term" value="P:proteolysis"/>
    <property type="evidence" value="ECO:0007669"/>
    <property type="project" value="UniProtKB-KW"/>
</dbReference>
<dbReference type="Gene3D" id="1.10.246.130">
    <property type="match status" value="1"/>
</dbReference>
<dbReference type="Gene3D" id="3.60.20.40">
    <property type="match status" value="1"/>
</dbReference>
<dbReference type="InterPro" id="IPR052896">
    <property type="entry name" value="GGT-like_enzyme"/>
</dbReference>
<dbReference type="InterPro" id="IPR043138">
    <property type="entry name" value="GGT_lsub_C"/>
</dbReference>
<dbReference type="InterPro" id="IPR043137">
    <property type="entry name" value="GGT_ssub"/>
</dbReference>
<dbReference type="InterPro" id="IPR029055">
    <property type="entry name" value="Ntn_hydrolases_N"/>
</dbReference>
<dbReference type="PANTHER" id="PTHR43881:SF5">
    <property type="entry name" value="GAMMA-GLUTAMYLTRANSPEPTIDASE"/>
    <property type="match status" value="1"/>
</dbReference>
<dbReference type="PANTHER" id="PTHR43881">
    <property type="entry name" value="GAMMA-GLUTAMYLTRANSPEPTIDASE (AFU_ORTHOLOGUE AFUA_4G13580)"/>
    <property type="match status" value="1"/>
</dbReference>
<dbReference type="Pfam" id="PF01019">
    <property type="entry name" value="G_glu_transpept"/>
    <property type="match status" value="1"/>
</dbReference>
<dbReference type="PRINTS" id="PR01210">
    <property type="entry name" value="GGTRANSPTASE"/>
</dbReference>
<dbReference type="SUPFAM" id="SSF56235">
    <property type="entry name" value="N-terminal nucleophile aminohydrolases (Ntn hydrolases)"/>
    <property type="match status" value="1"/>
</dbReference>
<feature type="chain" id="PRO_0000442767" description="Oxamate amidohydrolase large chain">
    <location>
        <begin position="1"/>
        <end position="341"/>
    </location>
</feature>
<feature type="chain" id="PRO_0000442768" description="Oxamate amidohydrolase small chain">
    <location>
        <begin position="342"/>
        <end position="528"/>
    </location>
</feature>
<feature type="active site" description="Nucleophile" evidence="4">
    <location>
        <position position="342"/>
    </location>
</feature>
<feature type="binding site" evidence="4">
    <location>
        <begin position="424"/>
        <end position="425"/>
    </location>
    <ligand>
        <name>substrate</name>
    </ligand>
</feature>
<feature type="site" description="Important for catalytic activity" evidence="4">
    <location>
        <position position="360"/>
    </location>
</feature>
<feature type="mutagenesis site" description="Unable to autoprocess into a mature heterodimer. Lack of amidohydrolase activity." evidence="1">
    <original>T</original>
    <variation>A</variation>
    <location>
        <position position="342"/>
    </location>
</feature>
<feature type="mutagenesis site" description="Forms a heterodimer, however lacks amidohydrolase activity." evidence="1">
    <original>S</original>
    <variation>A</variation>
    <location>
        <position position="360"/>
    </location>
</feature>
<feature type="strand" evidence="7">
    <location>
        <begin position="5"/>
        <end position="16"/>
    </location>
</feature>
<feature type="helix" evidence="7">
    <location>
        <begin position="17"/>
        <end position="28"/>
    </location>
</feature>
<feature type="helix" evidence="7">
    <location>
        <begin position="33"/>
        <end position="47"/>
    </location>
</feature>
<feature type="turn" evidence="7">
    <location>
        <begin position="49"/>
        <end position="51"/>
    </location>
</feature>
<feature type="strand" evidence="7">
    <location>
        <begin position="56"/>
        <end position="63"/>
    </location>
</feature>
<feature type="strand" evidence="7">
    <location>
        <begin position="65"/>
        <end position="67"/>
    </location>
</feature>
<feature type="strand" evidence="7">
    <location>
        <begin position="70"/>
        <end position="74"/>
    </location>
</feature>
<feature type="turn" evidence="7">
    <location>
        <begin position="84"/>
        <end position="89"/>
    </location>
</feature>
<feature type="strand" evidence="7">
    <location>
        <begin position="95"/>
        <end position="97"/>
    </location>
</feature>
<feature type="turn" evidence="7">
    <location>
        <begin position="98"/>
        <end position="100"/>
    </location>
</feature>
<feature type="helix" evidence="7">
    <location>
        <begin position="107"/>
        <end position="121"/>
    </location>
</feature>
<feature type="helix" evidence="7">
    <location>
        <begin position="128"/>
        <end position="131"/>
    </location>
</feature>
<feature type="helix" evidence="7">
    <location>
        <begin position="133"/>
        <end position="141"/>
    </location>
</feature>
<feature type="helix" evidence="7">
    <location>
        <begin position="147"/>
        <end position="155"/>
    </location>
</feature>
<feature type="helix" evidence="7">
    <location>
        <begin position="157"/>
        <end position="160"/>
    </location>
</feature>
<feature type="helix" evidence="7">
    <location>
        <begin position="166"/>
        <end position="170"/>
    </location>
</feature>
<feature type="strand" evidence="7">
    <location>
        <begin position="181"/>
        <end position="183"/>
    </location>
</feature>
<feature type="helix" evidence="7">
    <location>
        <begin position="186"/>
        <end position="198"/>
    </location>
</feature>
<feature type="helix" evidence="7">
    <location>
        <begin position="202"/>
        <end position="205"/>
    </location>
</feature>
<feature type="helix" evidence="7">
    <location>
        <begin position="207"/>
        <end position="219"/>
    </location>
</feature>
<feature type="helix" evidence="7">
    <location>
        <begin position="225"/>
        <end position="229"/>
    </location>
</feature>
<feature type="strand" evidence="7">
    <location>
        <begin position="239"/>
        <end position="243"/>
    </location>
</feature>
<feature type="strand" evidence="7">
    <location>
        <begin position="246"/>
        <end position="250"/>
    </location>
</feature>
<feature type="helix" evidence="7">
    <location>
        <begin position="254"/>
        <end position="264"/>
    </location>
</feature>
<feature type="helix" evidence="7">
    <location>
        <begin position="278"/>
        <end position="282"/>
    </location>
</feature>
<feature type="helix" evidence="7">
    <location>
        <begin position="286"/>
        <end position="295"/>
    </location>
</feature>
<feature type="helix" evidence="7">
    <location>
        <begin position="315"/>
        <end position="318"/>
    </location>
</feature>
<feature type="strand" evidence="7">
    <location>
        <begin position="343"/>
        <end position="348"/>
    </location>
</feature>
<feature type="strand" evidence="7">
    <location>
        <begin position="354"/>
        <end position="360"/>
    </location>
</feature>
<feature type="turn" evidence="7">
    <location>
        <begin position="364"/>
        <end position="367"/>
    </location>
</feature>
<feature type="turn" evidence="7">
    <location>
        <begin position="372"/>
        <end position="374"/>
    </location>
</feature>
<feature type="helix" evidence="7">
    <location>
        <begin position="382"/>
        <end position="384"/>
    </location>
</feature>
<feature type="strand" evidence="7">
    <location>
        <begin position="408"/>
        <end position="412"/>
    </location>
</feature>
<feature type="strand" evidence="7">
    <location>
        <begin position="417"/>
        <end position="423"/>
    </location>
</feature>
<feature type="helix" evidence="7">
    <location>
        <begin position="429"/>
        <end position="442"/>
    </location>
</feature>
<feature type="helix" evidence="7">
    <location>
        <begin position="446"/>
        <end position="451"/>
    </location>
</feature>
<feature type="strand" evidence="7">
    <location>
        <begin position="501"/>
        <end position="507"/>
    </location>
</feature>
<feature type="strand" evidence="7">
    <location>
        <begin position="513"/>
        <end position="516"/>
    </location>
</feature>
<feature type="turn" evidence="7">
    <location>
        <begin position="519"/>
        <end position="522"/>
    </location>
</feature>
<feature type="strand" evidence="7">
    <location>
        <begin position="524"/>
        <end position="528"/>
    </location>
</feature>
<name>HPXW_KLEP7</name>
<reference key="1">
    <citation type="submission" date="2006-09" db="EMBL/GenBank/DDBJ databases">
        <authorList>
            <consortium name="The Klebsiella pneumonia Genome Sequencing Project"/>
            <person name="McClelland M."/>
            <person name="Sanderson E.K."/>
            <person name="Spieth J."/>
            <person name="Clifton W.S."/>
            <person name="Latreille P."/>
            <person name="Sabo A."/>
            <person name="Pepin K."/>
            <person name="Bhonagiri V."/>
            <person name="Porwollik S."/>
            <person name="Ali J."/>
            <person name="Wilson R.K."/>
        </authorList>
    </citation>
    <scope>NUCLEOTIDE SEQUENCE [LARGE SCALE GENOMIC DNA]</scope>
    <source>
        <strain evidence="6">ATCC 700721 / MGH 78578</strain>
    </source>
</reference>
<reference key="2">
    <citation type="journal article" date="2016" name="Acta Crystallogr. D">
        <title>Biochemical and structural characterization of Klebsiella pneumoniae oxamate amidohydrolase in the uric acid degradation pathway.</title>
        <authorList>
            <person name="Hicks K.A."/>
            <person name="Ealick S.E."/>
        </authorList>
    </citation>
    <scope>X-RAY CRYSTALLOGRAPHY (2.65 ANGSTROMS) OF 1-341 AND 342-528</scope>
    <scope>FUNCTION</scope>
    <scope>CATALYTIC ACTIVITY</scope>
    <scope>BIOPHYSICOCHEMICAL PROPERTIES</scope>
    <scope>AUTOCATALYTIC CLEAVAGE</scope>
    <scope>ACTIVE SITE</scope>
    <scope>MUTAGENESIS OF THR-342 AND SER-360</scope>
    <scope>REACTION MECHANISM</scope>
    <scope>SUBUNIT</scope>
</reference>
<accession>A6T9C8</accession>
<protein>
    <recommendedName>
        <fullName evidence="2">Oxamate amidohydrolase proenzyme</fullName>
        <ecNumber evidence="1">3.5.1.126</ecNumber>
    </recommendedName>
    <component>
        <recommendedName>
            <fullName evidence="3">Oxamate amidohydrolase large chain</fullName>
        </recommendedName>
        <alternativeName>
            <fullName evidence="2">Oxamate amidohydrolase alpha chain</fullName>
        </alternativeName>
    </component>
    <component>
        <recommendedName>
            <fullName evidence="3">Oxamate amidohydrolase small chain</fullName>
        </recommendedName>
        <alternativeName>
            <fullName evidence="2">Oxamate amidohydrolase beta chain</fullName>
        </alternativeName>
    </component>
</protein>
<gene>
    <name evidence="2" type="primary">hpxW</name>
    <name evidence="3" type="ordered locus">KPN78578_17380</name>
    <name evidence="5" type="ORF">KPN_01768</name>
</gene>
<comment type="function">
    <text evidence="1">Involved in the uric acid degradation pathway. Catalyzes the conversion of oxamate to oxalate.</text>
</comment>
<comment type="catalytic activity">
    <reaction evidence="1">
        <text>oxamate + H2O = oxalate + NH4(+)</text>
        <dbReference type="Rhea" id="RHEA:51512"/>
        <dbReference type="ChEBI" id="CHEBI:15377"/>
        <dbReference type="ChEBI" id="CHEBI:28938"/>
        <dbReference type="ChEBI" id="CHEBI:30623"/>
        <dbReference type="ChEBI" id="CHEBI:58363"/>
        <dbReference type="EC" id="3.5.1.126"/>
    </reaction>
</comment>
<comment type="biophysicochemical properties">
    <kinetics>
        <text evidence="1">kcat is 5.5 sec(-1) with oxamate as substrate.</text>
    </kinetics>
</comment>
<comment type="subunit">
    <text evidence="1">Heterodimer that consists of a 35.5 kDa large (alpha) subunit and a 20 kDa small (beta) subunit, which are synthesized from a single polypeptide.</text>
</comment>
<comment type="PTM">
    <text evidence="1">Cleaved by autocatalysis into a large (alpha) and a small (beta) subunit.</text>
</comment>
<comment type="similarity">
    <text evidence="3">Belongs to the gamma-glutamyltransferase family.</text>
</comment>
<evidence type="ECO:0000269" key="1">
    <source>
    </source>
</evidence>
<evidence type="ECO:0000303" key="2">
    <source>
    </source>
</evidence>
<evidence type="ECO:0000305" key="3"/>
<evidence type="ECO:0000305" key="4">
    <source>
    </source>
</evidence>
<evidence type="ECO:0000312" key="5">
    <source>
        <dbReference type="EMBL" id="ABR77199.1"/>
    </source>
</evidence>
<evidence type="ECO:0000312" key="6">
    <source>
        <dbReference type="Proteomes" id="UP000000265"/>
    </source>
</evidence>
<evidence type="ECO:0007829" key="7">
    <source>
        <dbReference type="PDB" id="5HFT"/>
    </source>
</evidence>
<sequence length="528" mass="55542">MHSSNVSTHGMAVAPHHLASQSALAILREGGSAIEAMVAAAAAIAVVYPHMNGLGGDGFWLIVPPEGDPIAIDASGAAGSLATLEAYAGQRHIPNRGPQAALTVAGTVSGWVEALRISRDLTGRALPVARLLADAIGYAEDGIPVTASQAHATASKLEELRHQPGFSETWLVAGEAPRPGSRFRQPALAGTLRMLASDGLDSFYRGPLAERLAQGMAALGMPITLGDLQAHRARRPGPLTLQHQQGTLWNLAPPTQGLVSLAILGITDRLKMADADDAQTVHRIVEATKRAFALRDAHITDPRHLDVDVQQLLTPEALQPLADSIDDASASPWGGGKGPGDTVWMGVVDNSGLAVSFIQSIYHEFGSGVVLPDTGIVWQNRGAAFSLDPQHLLALAPGKQPFHTLNPAAARLNDGRVMVYGSMGGDGQPQTQAALFTRYILQGVPLQESISRPRWLLGRTWGQSSDSLKLEGRFAPACIARLRELGHDVEVLADFSEAMGHAGAIVRHPNGLLEGATDPRSNGAAAGY</sequence>
<organism>
    <name type="scientific">Klebsiella pneumoniae subsp. pneumoniae (strain ATCC 700721 / MGH 78578)</name>
    <dbReference type="NCBI Taxonomy" id="272620"/>
    <lineage>
        <taxon>Bacteria</taxon>
        <taxon>Pseudomonadati</taxon>
        <taxon>Pseudomonadota</taxon>
        <taxon>Gammaproteobacteria</taxon>
        <taxon>Enterobacterales</taxon>
        <taxon>Enterobacteriaceae</taxon>
        <taxon>Klebsiella/Raoultella group</taxon>
        <taxon>Klebsiella</taxon>
        <taxon>Klebsiella pneumoniae complex</taxon>
    </lineage>
</organism>
<keyword id="KW-0002">3D-structure</keyword>
<keyword id="KW-0378">Hydrolase</keyword>
<keyword id="KW-0645">Protease</keyword>
<keyword id="KW-0865">Zymogen</keyword>
<proteinExistence type="evidence at protein level"/>